<organism>
    <name type="scientific">Arabidopsis thaliana</name>
    <name type="common">Mouse-ear cress</name>
    <dbReference type="NCBI Taxonomy" id="3702"/>
    <lineage>
        <taxon>Eukaryota</taxon>
        <taxon>Viridiplantae</taxon>
        <taxon>Streptophyta</taxon>
        <taxon>Embryophyta</taxon>
        <taxon>Tracheophyta</taxon>
        <taxon>Spermatophyta</taxon>
        <taxon>Magnoliopsida</taxon>
        <taxon>eudicotyledons</taxon>
        <taxon>Gunneridae</taxon>
        <taxon>Pentapetalae</taxon>
        <taxon>rosids</taxon>
        <taxon>malvids</taxon>
        <taxon>Brassicales</taxon>
        <taxon>Brassicaceae</taxon>
        <taxon>Camelineae</taxon>
        <taxon>Arabidopsis</taxon>
    </lineage>
</organism>
<name>MCM8_ARATH</name>
<sequence length="801" mass="88125">MGFYGGGSMASGRPESTGIDSLGIGKILAVYIKDNENLAIDEDKLQLTAELIRVFSASPGRDIVSQVNEDGGGSFSLSLDLQQFKKISDIENFFINLEDNPKGVIPCMNAAVHKVLFDQWETNEFENVMKINVRLHNYPESSISLKNLRAAYIGKLVTVHGTVVKVSTVKPLVTQMAFDCGKCKTGITREFTDGKFSPPLKCDSHGCKSKTFTPIRSSAQTIDFQKIRVQELQKPEDHEEGRVPRTVECELMEDLVDICIPGDVVTVTGIIGVINNYMDIGGGKSKTKNQGFYYLFIEAVSVKNTKRQSAFENSEDSSSSAQTADVGDLYSFSQRDLEFIVKFKEEYGSDTFRRILHSVCPSIYGHEIVKAGITLSLFGGVRKHSMDRNKVPVRGDIHVIIVGDPGLGKSQLLQAAAAISPRGIYVCGNATTRAGLTVAVVKDSMTNDYAFEAGAMVLADGGLCCIDEFDKMTTEHQALLEAMEQQCVSVAKAGLVASLSARTSVIAAANPVGGHYNRAKTVNENLKMSAALLSRFDLVFILLDKPDELLDKQVSEHIMSLHSASGETSPALKKFKPVNAASQNAGYANMHAEGNSLLSRLRLDSEKDDDFSPVPGQLLRKYISYARNFVNPKMSKDAGEIIQKFYLKLRDHNTSADSTPITARQLESLVRLAQARARVDLREEITVQDAMDVVEIMKESLYDKLIDEHGVVDFGRSGGMSQQKEAKRFLSALDKQSELQQKDCFSVSEMYSLADRIGLRVPDIDTFLENLNIAGYLLKKGPKTYQVLSSSYSRSQSSRSR</sequence>
<gene>
    <name type="primary">MCM8</name>
    <name type="ordered locus">At3g09660</name>
    <name type="ORF">F11F8.25</name>
</gene>
<proteinExistence type="evidence at transcript level"/>
<reference key="1">
    <citation type="journal article" date="2013" name="PLoS Genet.">
        <title>MCM8 is required for a pathway of meiotic double-strand break repair independent of DMC1 in Arabidopsis thaliana.</title>
        <authorList>
            <person name="Crismani W."/>
            <person name="Portemer V."/>
            <person name="Froger N."/>
            <person name="Chelysheva L."/>
            <person name="Horlow C."/>
            <person name="Vrielynck N."/>
            <person name="Mercier R."/>
        </authorList>
    </citation>
    <scope>NUCLEOTIDE SEQUENCE [MRNA]</scope>
    <scope>FUNCTION</scope>
    <scope>DISRUPTION PHENOTYPE</scope>
</reference>
<reference key="2">
    <citation type="journal article" date="2000" name="Nature">
        <title>Sequence and analysis of chromosome 3 of the plant Arabidopsis thaliana.</title>
        <authorList>
            <person name="Salanoubat M."/>
            <person name="Lemcke K."/>
            <person name="Rieger M."/>
            <person name="Ansorge W."/>
            <person name="Unseld M."/>
            <person name="Fartmann B."/>
            <person name="Valle G."/>
            <person name="Bloecker H."/>
            <person name="Perez-Alonso M."/>
            <person name="Obermaier B."/>
            <person name="Delseny M."/>
            <person name="Boutry M."/>
            <person name="Grivell L.A."/>
            <person name="Mache R."/>
            <person name="Puigdomenech P."/>
            <person name="De Simone V."/>
            <person name="Choisne N."/>
            <person name="Artiguenave F."/>
            <person name="Robert C."/>
            <person name="Brottier P."/>
            <person name="Wincker P."/>
            <person name="Cattolico L."/>
            <person name="Weissenbach J."/>
            <person name="Saurin W."/>
            <person name="Quetier F."/>
            <person name="Schaefer M."/>
            <person name="Mueller-Auer S."/>
            <person name="Gabel C."/>
            <person name="Fuchs M."/>
            <person name="Benes V."/>
            <person name="Wurmbach E."/>
            <person name="Drzonek H."/>
            <person name="Erfle H."/>
            <person name="Jordan N."/>
            <person name="Bangert S."/>
            <person name="Wiedelmann R."/>
            <person name="Kranz H."/>
            <person name="Voss H."/>
            <person name="Holland R."/>
            <person name="Brandt P."/>
            <person name="Nyakatura G."/>
            <person name="Vezzi A."/>
            <person name="D'Angelo M."/>
            <person name="Pallavicini A."/>
            <person name="Toppo S."/>
            <person name="Simionati B."/>
            <person name="Conrad A."/>
            <person name="Hornischer K."/>
            <person name="Kauer G."/>
            <person name="Loehnert T.-H."/>
            <person name="Nordsiek G."/>
            <person name="Reichelt J."/>
            <person name="Scharfe M."/>
            <person name="Schoen O."/>
            <person name="Bargues M."/>
            <person name="Terol J."/>
            <person name="Climent J."/>
            <person name="Navarro P."/>
            <person name="Collado C."/>
            <person name="Perez-Perez A."/>
            <person name="Ottenwaelder B."/>
            <person name="Duchemin D."/>
            <person name="Cooke R."/>
            <person name="Laudie M."/>
            <person name="Berger-Llauro C."/>
            <person name="Purnelle B."/>
            <person name="Masuy D."/>
            <person name="de Haan M."/>
            <person name="Maarse A.C."/>
            <person name="Alcaraz J.-P."/>
            <person name="Cottet A."/>
            <person name="Casacuberta E."/>
            <person name="Monfort A."/>
            <person name="Argiriou A."/>
            <person name="Flores M."/>
            <person name="Liguori R."/>
            <person name="Vitale D."/>
            <person name="Mannhaupt G."/>
            <person name="Haase D."/>
            <person name="Schoof H."/>
            <person name="Rudd S."/>
            <person name="Zaccaria P."/>
            <person name="Mewes H.-W."/>
            <person name="Mayer K.F.X."/>
            <person name="Kaul S."/>
            <person name="Town C.D."/>
            <person name="Koo H.L."/>
            <person name="Tallon L.J."/>
            <person name="Jenkins J."/>
            <person name="Rooney T."/>
            <person name="Rizzo M."/>
            <person name="Walts A."/>
            <person name="Utterback T."/>
            <person name="Fujii C.Y."/>
            <person name="Shea T.P."/>
            <person name="Creasy T.H."/>
            <person name="Haas B."/>
            <person name="Maiti R."/>
            <person name="Wu D."/>
            <person name="Peterson J."/>
            <person name="Van Aken S."/>
            <person name="Pai G."/>
            <person name="Militscher J."/>
            <person name="Sellers P."/>
            <person name="Gill J.E."/>
            <person name="Feldblyum T.V."/>
            <person name="Preuss D."/>
            <person name="Lin X."/>
            <person name="Nierman W.C."/>
            <person name="Salzberg S.L."/>
            <person name="White O."/>
            <person name="Venter J.C."/>
            <person name="Fraser C.M."/>
            <person name="Kaneko T."/>
            <person name="Nakamura Y."/>
            <person name="Sato S."/>
            <person name="Kato T."/>
            <person name="Asamizu E."/>
            <person name="Sasamoto S."/>
            <person name="Kimura T."/>
            <person name="Idesawa K."/>
            <person name="Kawashima K."/>
            <person name="Kishida Y."/>
            <person name="Kiyokawa C."/>
            <person name="Kohara M."/>
            <person name="Matsumoto M."/>
            <person name="Matsuno A."/>
            <person name="Muraki A."/>
            <person name="Nakayama S."/>
            <person name="Nakazaki N."/>
            <person name="Shinpo S."/>
            <person name="Takeuchi C."/>
            <person name="Wada T."/>
            <person name="Watanabe A."/>
            <person name="Yamada M."/>
            <person name="Yasuda M."/>
            <person name="Tabata S."/>
        </authorList>
    </citation>
    <scope>NUCLEOTIDE SEQUENCE [LARGE SCALE GENOMIC DNA]</scope>
    <source>
        <strain>cv. Columbia</strain>
    </source>
</reference>
<reference key="3">
    <citation type="journal article" date="2017" name="Plant J.">
        <title>Araport11: a complete reannotation of the Arabidopsis thaliana reference genome.</title>
        <authorList>
            <person name="Cheng C.Y."/>
            <person name="Krishnakumar V."/>
            <person name="Chan A.P."/>
            <person name="Thibaud-Nissen F."/>
            <person name="Schobel S."/>
            <person name="Town C.D."/>
        </authorList>
    </citation>
    <scope>GENOME REANNOTATION</scope>
    <source>
        <strain>cv. Columbia</strain>
    </source>
</reference>
<reference key="4">
    <citation type="journal article" date="2007" name="Plant Physiol.">
        <title>Genome-wide analysis of the core DNA replication machinery in the higher plants Arabidopsis and rice.</title>
        <authorList>
            <person name="Shultz R.W."/>
            <person name="Tatineni V.M."/>
            <person name="Hanley-Bowdoin L."/>
            <person name="Thompson W.F."/>
        </authorList>
    </citation>
    <scope>GENE FAMILY</scope>
</reference>
<keyword id="KW-0067">ATP-binding</keyword>
<keyword id="KW-0227">DNA damage</keyword>
<keyword id="KW-0234">DNA repair</keyword>
<keyword id="KW-0238">DNA-binding</keyword>
<keyword id="KW-0347">Helicase</keyword>
<keyword id="KW-0378">Hydrolase</keyword>
<keyword id="KW-0469">Meiosis</keyword>
<keyword id="KW-0479">Metal-binding</keyword>
<keyword id="KW-0547">Nucleotide-binding</keyword>
<keyword id="KW-0539">Nucleus</keyword>
<keyword id="KW-1185">Reference proteome</keyword>
<keyword id="KW-0862">Zinc</keyword>
<keyword id="KW-0863">Zinc-finger</keyword>
<dbReference type="EC" id="3.6.4.12"/>
<dbReference type="EMBL" id="KC109786">
    <property type="protein sequence ID" value="AGC54635.1"/>
    <property type="molecule type" value="mRNA"/>
</dbReference>
<dbReference type="EMBL" id="AC016661">
    <property type="protein sequence ID" value="AAF23296.1"/>
    <property type="status" value="ALT_SEQ"/>
    <property type="molecule type" value="Genomic_DNA"/>
</dbReference>
<dbReference type="EMBL" id="CP002686">
    <property type="protein sequence ID" value="AEE74794.2"/>
    <property type="molecule type" value="Genomic_DNA"/>
</dbReference>
<dbReference type="RefSeq" id="NP_001319512.1">
    <property type="nucleotide sequence ID" value="NM_001337836.1"/>
</dbReference>
<dbReference type="SMR" id="Q9SF37"/>
<dbReference type="FunCoup" id="Q9SF37">
    <property type="interactions" value="2692"/>
</dbReference>
<dbReference type="STRING" id="3702.Q9SF37"/>
<dbReference type="PaxDb" id="3702-AT3G09660.1"/>
<dbReference type="ProteomicsDB" id="238324"/>
<dbReference type="EnsemblPlants" id="AT3G09660.1">
    <property type="protein sequence ID" value="AT3G09660.1"/>
    <property type="gene ID" value="AT3G09660"/>
</dbReference>
<dbReference type="GeneID" id="820123"/>
<dbReference type="Gramene" id="AT3G09660.1">
    <property type="protein sequence ID" value="AT3G09660.1"/>
    <property type="gene ID" value="AT3G09660"/>
</dbReference>
<dbReference type="KEGG" id="ath:AT3G09660"/>
<dbReference type="Araport" id="AT3G09660"/>
<dbReference type="TAIR" id="AT3G09660">
    <property type="gene designation" value="MCM8"/>
</dbReference>
<dbReference type="eggNOG" id="KOG0480">
    <property type="taxonomic scope" value="Eukaryota"/>
</dbReference>
<dbReference type="HOGENOM" id="CLU_000995_7_2_1"/>
<dbReference type="InParanoid" id="Q9SF37"/>
<dbReference type="PRO" id="PR:Q9SF37"/>
<dbReference type="Proteomes" id="UP000006548">
    <property type="component" value="Chromosome 3"/>
</dbReference>
<dbReference type="ExpressionAtlas" id="Q9SF37">
    <property type="expression patterns" value="baseline and differential"/>
</dbReference>
<dbReference type="GO" id="GO:0005634">
    <property type="term" value="C:nucleus"/>
    <property type="evidence" value="ECO:0007669"/>
    <property type="project" value="UniProtKB-SubCell"/>
</dbReference>
<dbReference type="GO" id="GO:0005524">
    <property type="term" value="F:ATP binding"/>
    <property type="evidence" value="ECO:0007669"/>
    <property type="project" value="UniProtKB-KW"/>
</dbReference>
<dbReference type="GO" id="GO:0016887">
    <property type="term" value="F:ATP hydrolysis activity"/>
    <property type="evidence" value="ECO:0007669"/>
    <property type="project" value="InterPro"/>
</dbReference>
<dbReference type="GO" id="GO:0003677">
    <property type="term" value="F:DNA binding"/>
    <property type="evidence" value="ECO:0007669"/>
    <property type="project" value="UniProtKB-KW"/>
</dbReference>
<dbReference type="GO" id="GO:0004386">
    <property type="term" value="F:helicase activity"/>
    <property type="evidence" value="ECO:0007669"/>
    <property type="project" value="UniProtKB-KW"/>
</dbReference>
<dbReference type="GO" id="GO:0008270">
    <property type="term" value="F:zinc ion binding"/>
    <property type="evidence" value="ECO:0007669"/>
    <property type="project" value="UniProtKB-KW"/>
</dbReference>
<dbReference type="GO" id="GO:0000724">
    <property type="term" value="P:double-strand break repair via homologous recombination"/>
    <property type="evidence" value="ECO:0000316"/>
    <property type="project" value="TAIR"/>
</dbReference>
<dbReference type="GO" id="GO:0007143">
    <property type="term" value="P:female meiotic nuclear division"/>
    <property type="evidence" value="ECO:0000315"/>
    <property type="project" value="TAIR"/>
</dbReference>
<dbReference type="GO" id="GO:0007140">
    <property type="term" value="P:male meiotic nuclear division"/>
    <property type="evidence" value="ECO:0000315"/>
    <property type="project" value="TAIR"/>
</dbReference>
<dbReference type="GO" id="GO:0009555">
    <property type="term" value="P:pollen development"/>
    <property type="evidence" value="ECO:0000315"/>
    <property type="project" value="TAIR"/>
</dbReference>
<dbReference type="CDD" id="cd17759">
    <property type="entry name" value="MCM8"/>
    <property type="match status" value="1"/>
</dbReference>
<dbReference type="CDD" id="cd22247">
    <property type="entry name" value="MCM8_WHD"/>
    <property type="match status" value="1"/>
</dbReference>
<dbReference type="FunFam" id="2.20.28.10:FF:000007">
    <property type="entry name" value="DNA helicase MCM8 isoform X1"/>
    <property type="match status" value="1"/>
</dbReference>
<dbReference type="Gene3D" id="2.20.28.10">
    <property type="match status" value="1"/>
</dbReference>
<dbReference type="Gene3D" id="2.40.50.140">
    <property type="entry name" value="Nucleic acid-binding proteins"/>
    <property type="match status" value="1"/>
</dbReference>
<dbReference type="Gene3D" id="3.40.50.300">
    <property type="entry name" value="P-loop containing nucleotide triphosphate hydrolases"/>
    <property type="match status" value="1"/>
</dbReference>
<dbReference type="InterPro" id="IPR003593">
    <property type="entry name" value="AAA+_ATPase"/>
</dbReference>
<dbReference type="InterPro" id="IPR031327">
    <property type="entry name" value="MCM"/>
</dbReference>
<dbReference type="InterPro" id="IPR056875">
    <property type="entry name" value="MCM8/REC_WHD"/>
</dbReference>
<dbReference type="InterPro" id="IPR001208">
    <property type="entry name" value="MCM_dom"/>
</dbReference>
<dbReference type="InterPro" id="IPR041562">
    <property type="entry name" value="MCM_lid"/>
</dbReference>
<dbReference type="InterPro" id="IPR033762">
    <property type="entry name" value="MCM_OB"/>
</dbReference>
<dbReference type="InterPro" id="IPR012340">
    <property type="entry name" value="NA-bd_OB-fold"/>
</dbReference>
<dbReference type="InterPro" id="IPR027417">
    <property type="entry name" value="P-loop_NTPase"/>
</dbReference>
<dbReference type="PANTHER" id="PTHR11630:SF47">
    <property type="entry name" value="DNA HELICASE MCM8"/>
    <property type="match status" value="1"/>
</dbReference>
<dbReference type="PANTHER" id="PTHR11630">
    <property type="entry name" value="DNA REPLICATION LICENSING FACTOR MCM FAMILY MEMBER"/>
    <property type="match status" value="1"/>
</dbReference>
<dbReference type="Pfam" id="PF00493">
    <property type="entry name" value="MCM"/>
    <property type="match status" value="1"/>
</dbReference>
<dbReference type="Pfam" id="PF17855">
    <property type="entry name" value="MCM_lid"/>
    <property type="match status" value="1"/>
</dbReference>
<dbReference type="Pfam" id="PF17207">
    <property type="entry name" value="MCM_OB"/>
    <property type="match status" value="1"/>
</dbReference>
<dbReference type="Pfam" id="PF25051">
    <property type="entry name" value="WHD_MCM8"/>
    <property type="match status" value="1"/>
</dbReference>
<dbReference type="PRINTS" id="PR01657">
    <property type="entry name" value="MCMFAMILY"/>
</dbReference>
<dbReference type="SMART" id="SM00382">
    <property type="entry name" value="AAA"/>
    <property type="match status" value="1"/>
</dbReference>
<dbReference type="SMART" id="SM00350">
    <property type="entry name" value="MCM"/>
    <property type="match status" value="1"/>
</dbReference>
<dbReference type="SUPFAM" id="SSF50249">
    <property type="entry name" value="Nucleic acid-binding proteins"/>
    <property type="match status" value="1"/>
</dbReference>
<dbReference type="SUPFAM" id="SSF52540">
    <property type="entry name" value="P-loop containing nucleoside triphosphate hydrolases"/>
    <property type="match status" value="1"/>
</dbReference>
<dbReference type="PROSITE" id="PS50051">
    <property type="entry name" value="MCM_2"/>
    <property type="match status" value="1"/>
</dbReference>
<protein>
    <recommendedName>
        <fullName>Probable DNA helicase MCM8</fullName>
        <ecNumber>3.6.4.12</ecNumber>
    </recommendedName>
    <alternativeName>
        <fullName>Minichromosome maintenance 8</fullName>
        <shortName>AtMCM8</shortName>
    </alternativeName>
</protein>
<feature type="chain" id="PRO_0000426001" description="Probable DNA helicase MCM8">
    <location>
        <begin position="1"/>
        <end position="801"/>
    </location>
</feature>
<feature type="domain" description="MCM">
    <location>
        <begin position="351"/>
        <end position="558"/>
    </location>
</feature>
<feature type="zinc finger region" description="C4-type" evidence="2">
    <location>
        <begin position="180"/>
        <end position="207"/>
    </location>
</feature>
<feature type="short sequence motif" description="Arginine finger">
    <location>
        <begin position="534"/>
        <end position="537"/>
    </location>
</feature>
<feature type="binding site" evidence="1">
    <location>
        <begin position="403"/>
        <end position="410"/>
    </location>
    <ligand>
        <name>ATP</name>
        <dbReference type="ChEBI" id="CHEBI:30616"/>
    </ligand>
</feature>
<accession>Q9SF37</accession>
<accession>L7UY20</accession>
<evidence type="ECO:0000250" key="1"/>
<evidence type="ECO:0000255" key="2"/>
<evidence type="ECO:0000269" key="3">
    <source>
    </source>
</evidence>
<evidence type="ECO:0000305" key="4"/>
<comment type="function">
    <text evidence="3">Probable DNA helicase that plays a role in meiotic double-strand break (DSB) repair, but seems not required for recombination with the homologous chromosome. May be involved with RAD51 in a backup pathway that repairs meiotic DSB without giving meiotic crossover, in parallel to the meiotic homologous recombination which relies on DMC1.</text>
</comment>
<comment type="catalytic activity">
    <reaction>
        <text>ATP + H2O = ADP + phosphate + H(+)</text>
        <dbReference type="Rhea" id="RHEA:13065"/>
        <dbReference type="ChEBI" id="CHEBI:15377"/>
        <dbReference type="ChEBI" id="CHEBI:15378"/>
        <dbReference type="ChEBI" id="CHEBI:30616"/>
        <dbReference type="ChEBI" id="CHEBI:43474"/>
        <dbReference type="ChEBI" id="CHEBI:456216"/>
        <dbReference type="EC" id="3.6.4.12"/>
    </reaction>
</comment>
<comment type="subcellular location">
    <subcellularLocation>
        <location evidence="4">Nucleus</location>
    </subcellularLocation>
</comment>
<comment type="disruption phenotype">
    <text evidence="3">Reduced fertility and seed numbers due to defects in gametogenesis.</text>
</comment>
<comment type="similarity">
    <text evidence="4">Belongs to the MCM family.</text>
</comment>
<comment type="sequence caution" evidence="4">
    <conflict type="erroneous gene model prediction">
        <sequence resource="EMBL-CDS" id="AAF23296"/>
    </conflict>
</comment>